<protein>
    <recommendedName>
        <fullName>leu operon leader peptide</fullName>
    </recommendedName>
    <alternativeName>
        <fullName>leu operon attenuator peptide</fullName>
    </alternativeName>
</protein>
<feature type="peptide" id="PRO_0000043996" description="leu operon leader peptide">
    <location>
        <begin position="1"/>
        <end position="28"/>
    </location>
</feature>
<feature type="sequence variant" description="In strain: AU1808.">
    <original>L</original>
    <variation>LL</variation>
    <location>
        <position position="13"/>
    </location>
</feature>
<keyword id="KW-0028">Amino-acid biosynthesis</keyword>
<keyword id="KW-0100">Branched-chain amino acid biosynthesis</keyword>
<keyword id="KW-0428">Leader peptide</keyword>
<keyword id="KW-0432">Leucine biosynthesis</keyword>
<keyword id="KW-1185">Reference proteome</keyword>
<sequence length="28" mass="3146">MTHIVRFIGLLLLNASSLRGRRVSGIQH</sequence>
<accession>P0AD81</accession>
<accession>P09149</accession>
<accession>Q8VSS2</accession>
<accession>Q8VSS3</accession>
<dbReference type="EMBL" id="AE005174">
    <property type="protein sequence ID" value="AAG54379.1"/>
    <property type="molecule type" value="Genomic_DNA"/>
</dbReference>
<dbReference type="EMBL" id="BA000007">
    <property type="protein sequence ID" value="BAB33502.1"/>
    <property type="molecule type" value="Genomic_DNA"/>
</dbReference>
<dbReference type="EMBL" id="AF368048">
    <property type="protein sequence ID" value="AAL38430.1"/>
    <property type="molecule type" value="Genomic_DNA"/>
</dbReference>
<dbReference type="EMBL" id="AF368047">
    <property type="protein sequence ID" value="AAL38429.1"/>
    <property type="molecule type" value="Genomic_DNA"/>
</dbReference>
<dbReference type="PIR" id="G85489">
    <property type="entry name" value="G85489"/>
</dbReference>
<dbReference type="PIR" id="G90638">
    <property type="entry name" value="G90638"/>
</dbReference>
<dbReference type="RefSeq" id="NP_308106.1">
    <property type="nucleotide sequence ID" value="NC_002695.1"/>
</dbReference>
<dbReference type="RefSeq" id="WP_001300467.1">
    <property type="nucleotide sequence ID" value="NZ_VOAI01000002.1"/>
</dbReference>
<dbReference type="STRING" id="155864.Z0084"/>
<dbReference type="GeneID" id="913517"/>
<dbReference type="GeneID" id="93777360"/>
<dbReference type="KEGG" id="ece:Z0084"/>
<dbReference type="KEGG" id="ecs:ECs_0079"/>
<dbReference type="PATRIC" id="fig|83334.175.peg.217"/>
<dbReference type="HOGENOM" id="CLU_221572_0_0_6"/>
<dbReference type="Proteomes" id="UP000000558">
    <property type="component" value="Chromosome"/>
</dbReference>
<dbReference type="Proteomes" id="UP000002519">
    <property type="component" value="Chromosome"/>
</dbReference>
<dbReference type="GO" id="GO:0009098">
    <property type="term" value="P:L-leucine biosynthetic process"/>
    <property type="evidence" value="ECO:0007669"/>
    <property type="project" value="UniProtKB-KW"/>
</dbReference>
<dbReference type="InterPro" id="IPR012570">
    <property type="entry name" value="Leu_leader"/>
</dbReference>
<dbReference type="NCBIfam" id="NF007397">
    <property type="entry name" value="PRK09925.1"/>
    <property type="match status" value="1"/>
</dbReference>
<dbReference type="Pfam" id="PF08054">
    <property type="entry name" value="Leu_leader"/>
    <property type="match status" value="1"/>
</dbReference>
<comment type="function">
    <text evidence="1">Involved in control of the biosynthesis of leucine.</text>
</comment>
<reference key="1">
    <citation type="journal article" date="2001" name="Nature">
        <title>Genome sequence of enterohaemorrhagic Escherichia coli O157:H7.</title>
        <authorList>
            <person name="Perna N.T."/>
            <person name="Plunkett G. III"/>
            <person name="Burland V."/>
            <person name="Mau B."/>
            <person name="Glasner J.D."/>
            <person name="Rose D.J."/>
            <person name="Mayhew G.F."/>
            <person name="Evans P.S."/>
            <person name="Gregor J."/>
            <person name="Kirkpatrick H.A."/>
            <person name="Posfai G."/>
            <person name="Hackett J."/>
            <person name="Klink S."/>
            <person name="Boutin A."/>
            <person name="Shao Y."/>
            <person name="Miller L."/>
            <person name="Grotbeck E.J."/>
            <person name="Davis N.W."/>
            <person name="Lim A."/>
            <person name="Dimalanta E.T."/>
            <person name="Potamousis K."/>
            <person name="Apodaca J."/>
            <person name="Anantharaman T.S."/>
            <person name="Lin J."/>
            <person name="Yen G."/>
            <person name="Schwartz D.C."/>
            <person name="Welch R.A."/>
            <person name="Blattner F.R."/>
        </authorList>
    </citation>
    <scope>NUCLEOTIDE SEQUENCE [LARGE SCALE GENOMIC DNA]</scope>
    <source>
        <strain>O157:H7 / EDL933 / ATCC 700927 / EHEC</strain>
    </source>
</reference>
<reference key="2">
    <citation type="journal article" date="2001" name="DNA Res.">
        <title>Complete genome sequence of enterohemorrhagic Escherichia coli O157:H7 and genomic comparison with a laboratory strain K-12.</title>
        <authorList>
            <person name="Hayashi T."/>
            <person name="Makino K."/>
            <person name="Ohnishi M."/>
            <person name="Kurokawa K."/>
            <person name="Ishii K."/>
            <person name="Yokoyama K."/>
            <person name="Han C.-G."/>
            <person name="Ohtsubo E."/>
            <person name="Nakayama K."/>
            <person name="Murata T."/>
            <person name="Tanaka M."/>
            <person name="Tobe T."/>
            <person name="Iida T."/>
            <person name="Takami H."/>
            <person name="Honda T."/>
            <person name="Sasakawa C."/>
            <person name="Ogasawara N."/>
            <person name="Yasunaga T."/>
            <person name="Kuhara S."/>
            <person name="Shiba T."/>
            <person name="Hattori M."/>
            <person name="Shinagawa H."/>
        </authorList>
    </citation>
    <scope>NUCLEOTIDE SEQUENCE [LARGE SCALE GENOMIC DNA]</scope>
    <source>
        <strain>O157:H7 / Sakai / RIMD 0509952 / EHEC</strain>
    </source>
</reference>
<reference key="3">
    <citation type="journal article" date="2001" name="J. Bacteriol.">
        <title>Ancestral divergence, genome diversification, and phylogeographic variation in subpopulations of sorbitol-negative, beta-glucuronidase-negative enterohemorrhagic Escherichia coli O157.</title>
        <authorList>
            <person name="Kim J."/>
            <person name="Nietfeldt J.W."/>
            <person name="Ju J."/>
            <person name="Wise J."/>
            <person name="Fegan N."/>
            <person name="Desmarchelier P."/>
            <person name="Benson A.K."/>
        </authorList>
    </citation>
    <scope>NUCLEOTIDE SEQUENCE [GENOMIC DNA] OF 1-19</scope>
    <source>
        <strain>O157:H7 / Au1808 / EHEC</strain>
        <strain>O157:H7 / Au6 / EHEC</strain>
    </source>
</reference>
<name>LPL_ECO57</name>
<evidence type="ECO:0000250" key="1"/>
<organism>
    <name type="scientific">Escherichia coli O157:H7</name>
    <dbReference type="NCBI Taxonomy" id="83334"/>
    <lineage>
        <taxon>Bacteria</taxon>
        <taxon>Pseudomonadati</taxon>
        <taxon>Pseudomonadota</taxon>
        <taxon>Gammaproteobacteria</taxon>
        <taxon>Enterobacterales</taxon>
        <taxon>Enterobacteriaceae</taxon>
        <taxon>Escherichia</taxon>
    </lineage>
</organism>
<gene>
    <name type="primary">leuL</name>
    <name type="ordered locus">Z0084</name>
    <name type="ordered locus">ECs0079</name>
</gene>
<proteinExistence type="inferred from homology"/>